<dbReference type="EC" id="4.1.1.65" evidence="1"/>
<dbReference type="EMBL" id="CP000252">
    <property type="protein sequence ID" value="ABC77473.1"/>
    <property type="molecule type" value="Genomic_DNA"/>
</dbReference>
<dbReference type="RefSeq" id="WP_011417495.1">
    <property type="nucleotide sequence ID" value="NC_007759.1"/>
</dbReference>
<dbReference type="SMR" id="Q2LTR6"/>
<dbReference type="STRING" id="56780.SYN_00913"/>
<dbReference type="KEGG" id="sat:SYN_00913"/>
<dbReference type="eggNOG" id="COG0688">
    <property type="taxonomic scope" value="Bacteria"/>
</dbReference>
<dbReference type="HOGENOM" id="CLU_072492_0_0_7"/>
<dbReference type="InParanoid" id="Q2LTR6"/>
<dbReference type="OrthoDB" id="9790893at2"/>
<dbReference type="UniPathway" id="UPA00558">
    <property type="reaction ID" value="UER00616"/>
</dbReference>
<dbReference type="Proteomes" id="UP000001933">
    <property type="component" value="Chromosome"/>
</dbReference>
<dbReference type="GO" id="GO:0005886">
    <property type="term" value="C:plasma membrane"/>
    <property type="evidence" value="ECO:0007669"/>
    <property type="project" value="UniProtKB-SubCell"/>
</dbReference>
<dbReference type="GO" id="GO:0004609">
    <property type="term" value="F:phosphatidylserine decarboxylase activity"/>
    <property type="evidence" value="ECO:0007669"/>
    <property type="project" value="UniProtKB-UniRule"/>
</dbReference>
<dbReference type="GO" id="GO:0006646">
    <property type="term" value="P:phosphatidylethanolamine biosynthetic process"/>
    <property type="evidence" value="ECO:0007669"/>
    <property type="project" value="UniProtKB-UniRule"/>
</dbReference>
<dbReference type="HAMAP" id="MF_00664">
    <property type="entry name" value="PS_decarb_PSD_A"/>
    <property type="match status" value="1"/>
</dbReference>
<dbReference type="InterPro" id="IPR003817">
    <property type="entry name" value="PS_Dcarbxylase"/>
</dbReference>
<dbReference type="InterPro" id="IPR033175">
    <property type="entry name" value="PSD-A"/>
</dbReference>
<dbReference type="NCBIfam" id="NF003678">
    <property type="entry name" value="PRK05305.1-2"/>
    <property type="match status" value="1"/>
</dbReference>
<dbReference type="NCBIfam" id="NF003685">
    <property type="entry name" value="PRK05305.2-5"/>
    <property type="match status" value="1"/>
</dbReference>
<dbReference type="PANTHER" id="PTHR35809">
    <property type="entry name" value="ARCHAETIDYLSERINE DECARBOXYLASE PROENZYME-RELATED"/>
    <property type="match status" value="1"/>
</dbReference>
<dbReference type="PANTHER" id="PTHR35809:SF1">
    <property type="entry name" value="ARCHAETIDYLSERINE DECARBOXYLASE PROENZYME-RELATED"/>
    <property type="match status" value="1"/>
</dbReference>
<dbReference type="Pfam" id="PF02666">
    <property type="entry name" value="PS_Dcarbxylase"/>
    <property type="match status" value="1"/>
</dbReference>
<protein>
    <recommendedName>
        <fullName evidence="1">Phosphatidylserine decarboxylase proenzyme</fullName>
        <ecNumber evidence="1">4.1.1.65</ecNumber>
    </recommendedName>
    <component>
        <recommendedName>
            <fullName evidence="1">Phosphatidylserine decarboxylase alpha chain</fullName>
        </recommendedName>
    </component>
    <component>
        <recommendedName>
            <fullName evidence="1">Phosphatidylserine decarboxylase beta chain</fullName>
        </recommendedName>
    </component>
</protein>
<name>PSD_SYNAS</name>
<proteinExistence type="inferred from homology"/>
<comment type="function">
    <text evidence="1">Catalyzes the formation of phosphatidylethanolamine (PtdEtn) from phosphatidylserine (PtdSer).</text>
</comment>
<comment type="catalytic activity">
    <reaction evidence="1">
        <text>a 1,2-diacyl-sn-glycero-3-phospho-L-serine + H(+) = a 1,2-diacyl-sn-glycero-3-phosphoethanolamine + CO2</text>
        <dbReference type="Rhea" id="RHEA:20828"/>
        <dbReference type="ChEBI" id="CHEBI:15378"/>
        <dbReference type="ChEBI" id="CHEBI:16526"/>
        <dbReference type="ChEBI" id="CHEBI:57262"/>
        <dbReference type="ChEBI" id="CHEBI:64612"/>
        <dbReference type="EC" id="4.1.1.65"/>
    </reaction>
</comment>
<comment type="cofactor">
    <cofactor evidence="1">
        <name>pyruvate</name>
        <dbReference type="ChEBI" id="CHEBI:15361"/>
    </cofactor>
    <text evidence="1">Binds 1 pyruvoyl group covalently per subunit.</text>
</comment>
<comment type="pathway">
    <text evidence="1">Phospholipid metabolism; phosphatidylethanolamine biosynthesis; phosphatidylethanolamine from CDP-diacylglycerol: step 2/2.</text>
</comment>
<comment type="subunit">
    <text evidence="1">Heterodimer of a large membrane-associated beta subunit and a small pyruvoyl-containing alpha subunit.</text>
</comment>
<comment type="subcellular location">
    <subcellularLocation>
        <location evidence="1">Cell membrane</location>
        <topology evidence="1">Peripheral membrane protein</topology>
    </subcellularLocation>
</comment>
<comment type="PTM">
    <text evidence="1">Is synthesized initially as an inactive proenzyme. Formation of the active enzyme involves a self-maturation process in which the active site pyruvoyl group is generated from an internal serine residue via an autocatalytic post-translational modification. Two non-identical subunits are generated from the proenzyme in this reaction, and the pyruvate is formed at the N-terminus of the alpha chain, which is derived from the carboxyl end of the proenzyme. The post-translation cleavage follows an unusual pathway, termed non-hydrolytic serinolysis, in which the side chain hydroxyl group of the serine supplies its oxygen atom to form the C-terminus of the beta chain, while the remainder of the serine residue undergoes an oxidative deamination to produce ammonia and the pyruvoyl prosthetic group on the alpha chain.</text>
</comment>
<comment type="similarity">
    <text evidence="1">Belongs to the phosphatidylserine decarboxylase family. PSD-A subfamily.</text>
</comment>
<keyword id="KW-1003">Cell membrane</keyword>
<keyword id="KW-0210">Decarboxylase</keyword>
<keyword id="KW-0444">Lipid biosynthesis</keyword>
<keyword id="KW-0443">Lipid metabolism</keyword>
<keyword id="KW-0456">Lyase</keyword>
<keyword id="KW-0472">Membrane</keyword>
<keyword id="KW-0594">Phospholipid biosynthesis</keyword>
<keyword id="KW-1208">Phospholipid metabolism</keyword>
<keyword id="KW-0670">Pyruvate</keyword>
<keyword id="KW-1185">Reference proteome</keyword>
<keyword id="KW-0865">Zymogen</keyword>
<reference key="1">
    <citation type="journal article" date="2007" name="Proc. Natl. Acad. Sci. U.S.A.">
        <title>The genome of Syntrophus aciditrophicus: life at the thermodynamic limit of microbial growth.</title>
        <authorList>
            <person name="McInerney M.J."/>
            <person name="Rohlin L."/>
            <person name="Mouttaki H."/>
            <person name="Kim U."/>
            <person name="Krupp R.S."/>
            <person name="Rios-Hernandez L."/>
            <person name="Sieber J."/>
            <person name="Struchtemeyer C.G."/>
            <person name="Bhattacharyya A."/>
            <person name="Campbell J.W."/>
            <person name="Gunsalus R.P."/>
        </authorList>
    </citation>
    <scope>NUCLEOTIDE SEQUENCE [LARGE SCALE GENOMIC DNA]</scope>
    <source>
        <strain>SB</strain>
    </source>
</reference>
<sequence>MKHDSFIAREGIPFIIAFGLTTLLAVFFLEQSWIAVLPLTATLFTCWFFRNPERHTPEGEKLIVSPADGKVIRIDEDFHHEMLSQPCSKVSIFMNVFNVHVNRVPYSGKVTKISYSPGRFLSANLDKASEQNERNAILVRTSDGKEIMTIQIAGLIARRIVCWVREEDVVKRGERFGMIRFGSRLEVFMPKETKILVTVGEKVKAGESPLGTF</sequence>
<accession>Q2LTR6</accession>
<evidence type="ECO:0000255" key="1">
    <source>
        <dbReference type="HAMAP-Rule" id="MF_00664"/>
    </source>
</evidence>
<organism>
    <name type="scientific">Syntrophus aciditrophicus (strain SB)</name>
    <dbReference type="NCBI Taxonomy" id="56780"/>
    <lineage>
        <taxon>Bacteria</taxon>
        <taxon>Pseudomonadati</taxon>
        <taxon>Thermodesulfobacteriota</taxon>
        <taxon>Syntrophia</taxon>
        <taxon>Syntrophales</taxon>
        <taxon>Syntrophaceae</taxon>
        <taxon>Syntrophus</taxon>
    </lineage>
</organism>
<gene>
    <name evidence="1" type="primary">psd</name>
    <name type="ordered locus">SYNAS_15940</name>
    <name type="ORF">SYN_00913</name>
</gene>
<feature type="chain" id="PRO_0000262275" description="Phosphatidylserine decarboxylase beta chain" evidence="1">
    <location>
        <begin position="1"/>
        <end position="182"/>
    </location>
</feature>
<feature type="chain" id="PRO_0000262276" description="Phosphatidylserine decarboxylase alpha chain" evidence="1">
    <location>
        <begin position="183"/>
        <end position="213"/>
    </location>
</feature>
<feature type="active site" description="Schiff-base intermediate with substrate; via pyruvic acid" evidence="1">
    <location>
        <position position="183"/>
    </location>
</feature>
<feature type="site" description="Cleavage (non-hydrolytic); by autocatalysis" evidence="1">
    <location>
        <begin position="182"/>
        <end position="183"/>
    </location>
</feature>
<feature type="modified residue" description="Pyruvic acid (Ser); by autocatalysis" evidence="1">
    <location>
        <position position="183"/>
    </location>
</feature>